<organism>
    <name type="scientific">Burkholderia lata (strain ATCC 17760 / DSM 23089 / LMG 22485 / NCIMB 9086 / R18194 / 383)</name>
    <dbReference type="NCBI Taxonomy" id="482957"/>
    <lineage>
        <taxon>Bacteria</taxon>
        <taxon>Pseudomonadati</taxon>
        <taxon>Pseudomonadota</taxon>
        <taxon>Betaproteobacteria</taxon>
        <taxon>Burkholderiales</taxon>
        <taxon>Burkholderiaceae</taxon>
        <taxon>Burkholderia</taxon>
        <taxon>Burkholderia cepacia complex</taxon>
    </lineage>
</organism>
<evidence type="ECO:0000255" key="1">
    <source>
        <dbReference type="HAMAP-Rule" id="MF_01632"/>
    </source>
</evidence>
<accession>Q39E37</accession>
<proteinExistence type="inferred from homology"/>
<keyword id="KW-0963">Cytoplasm</keyword>
<keyword id="KW-0456">Lyase</keyword>
<keyword id="KW-0670">Pyruvate</keyword>
<keyword id="KW-0831">Ubiquinone biosynthesis</keyword>
<feature type="chain" id="PRO_0000240541" description="Probable chorismate pyruvate-lyase">
    <location>
        <begin position="1"/>
        <end position="198"/>
    </location>
</feature>
<feature type="binding site" evidence="1">
    <location>
        <position position="73"/>
    </location>
    <ligand>
        <name>substrate</name>
    </ligand>
</feature>
<feature type="binding site" evidence="1">
    <location>
        <position position="111"/>
    </location>
    <ligand>
        <name>substrate</name>
    </ligand>
</feature>
<feature type="binding site" evidence="1">
    <location>
        <position position="172"/>
    </location>
    <ligand>
        <name>substrate</name>
    </ligand>
</feature>
<comment type="function">
    <text evidence="1">Removes the pyruvyl group from chorismate, with concomitant aromatization of the ring, to provide 4-hydroxybenzoate (4HB) for the ubiquinone pathway.</text>
</comment>
<comment type="catalytic activity">
    <reaction evidence="1">
        <text>chorismate = 4-hydroxybenzoate + pyruvate</text>
        <dbReference type="Rhea" id="RHEA:16505"/>
        <dbReference type="ChEBI" id="CHEBI:15361"/>
        <dbReference type="ChEBI" id="CHEBI:17879"/>
        <dbReference type="ChEBI" id="CHEBI:29748"/>
        <dbReference type="EC" id="4.1.3.40"/>
    </reaction>
</comment>
<comment type="pathway">
    <text evidence="1">Cofactor biosynthesis; ubiquinone biosynthesis.</text>
</comment>
<comment type="subcellular location">
    <subcellularLocation>
        <location evidence="1">Cytoplasm</location>
    </subcellularLocation>
</comment>
<comment type="similarity">
    <text evidence="1">Belongs to the UbiC family.</text>
</comment>
<reference key="1">
    <citation type="submission" date="2005-10" db="EMBL/GenBank/DDBJ databases">
        <title>Complete sequence of chromosome 1 of Burkholderia sp. 383.</title>
        <authorList>
            <consortium name="US DOE Joint Genome Institute"/>
            <person name="Copeland A."/>
            <person name="Lucas S."/>
            <person name="Lapidus A."/>
            <person name="Barry K."/>
            <person name="Detter J.C."/>
            <person name="Glavina T."/>
            <person name="Hammon N."/>
            <person name="Israni S."/>
            <person name="Pitluck S."/>
            <person name="Chain P."/>
            <person name="Malfatti S."/>
            <person name="Shin M."/>
            <person name="Vergez L."/>
            <person name="Schmutz J."/>
            <person name="Larimer F."/>
            <person name="Land M."/>
            <person name="Kyrpides N."/>
            <person name="Lykidis A."/>
            <person name="Richardson P."/>
        </authorList>
    </citation>
    <scope>NUCLEOTIDE SEQUENCE [LARGE SCALE GENOMIC DNA]</scope>
    <source>
        <strain>ATCC 17760 / DSM 23089 / LMG 22485 / NCIMB 9086 / R18194 / 383</strain>
    </source>
</reference>
<dbReference type="EC" id="4.1.3.40" evidence="1"/>
<dbReference type="EMBL" id="CP000151">
    <property type="protein sequence ID" value="ABB09279.1"/>
    <property type="molecule type" value="Genomic_DNA"/>
</dbReference>
<dbReference type="RefSeq" id="WP_011352805.1">
    <property type="nucleotide sequence ID" value="NC_007510.1"/>
</dbReference>
<dbReference type="SMR" id="Q39E37"/>
<dbReference type="GeneID" id="45095572"/>
<dbReference type="KEGG" id="bur:Bcep18194_A5685"/>
<dbReference type="PATRIC" id="fig|482957.22.peg.2662"/>
<dbReference type="HOGENOM" id="CLU_096824_0_0_4"/>
<dbReference type="UniPathway" id="UPA00232"/>
<dbReference type="Proteomes" id="UP000002705">
    <property type="component" value="Chromosome 1"/>
</dbReference>
<dbReference type="GO" id="GO:0005829">
    <property type="term" value="C:cytosol"/>
    <property type="evidence" value="ECO:0007669"/>
    <property type="project" value="TreeGrafter"/>
</dbReference>
<dbReference type="GO" id="GO:0008813">
    <property type="term" value="F:chorismate lyase activity"/>
    <property type="evidence" value="ECO:0007669"/>
    <property type="project" value="UniProtKB-UniRule"/>
</dbReference>
<dbReference type="GO" id="GO:0042866">
    <property type="term" value="P:pyruvate biosynthetic process"/>
    <property type="evidence" value="ECO:0007669"/>
    <property type="project" value="UniProtKB-UniRule"/>
</dbReference>
<dbReference type="GO" id="GO:0006744">
    <property type="term" value="P:ubiquinone biosynthetic process"/>
    <property type="evidence" value="ECO:0007669"/>
    <property type="project" value="UniProtKB-UniRule"/>
</dbReference>
<dbReference type="Gene3D" id="3.40.1410.10">
    <property type="entry name" value="Chorismate lyase-like"/>
    <property type="match status" value="1"/>
</dbReference>
<dbReference type="HAMAP" id="MF_01632">
    <property type="entry name" value="UbiC"/>
    <property type="match status" value="1"/>
</dbReference>
<dbReference type="InterPro" id="IPR007440">
    <property type="entry name" value="Chorismate--pyruvate_lyase"/>
</dbReference>
<dbReference type="InterPro" id="IPR028978">
    <property type="entry name" value="Chorismate_lyase_/UTRA_dom_sf"/>
</dbReference>
<dbReference type="PANTHER" id="PTHR38683">
    <property type="entry name" value="CHORISMATE PYRUVATE-LYASE"/>
    <property type="match status" value="1"/>
</dbReference>
<dbReference type="PANTHER" id="PTHR38683:SF1">
    <property type="entry name" value="CHORISMATE PYRUVATE-LYASE"/>
    <property type="match status" value="1"/>
</dbReference>
<dbReference type="Pfam" id="PF04345">
    <property type="entry name" value="Chor_lyase"/>
    <property type="match status" value="1"/>
</dbReference>
<dbReference type="SUPFAM" id="SSF64288">
    <property type="entry name" value="Chorismate lyase-like"/>
    <property type="match status" value="1"/>
</dbReference>
<gene>
    <name evidence="1" type="primary">ubiC</name>
    <name type="ordered locus">Bcep18194_A5685</name>
</gene>
<name>UBIC_BURL3</name>
<sequence length="198" mass="21549">MRFDGGQAGWRETPRPGCTLDQRDWLTRGGSLTAHLARLGRVNVRVTREAVDCPWFDEPDAVASAPRAPMWVREVILSVDGTPYVAAHSIAPLAASKGVWQAMRRLRTRPLAELLYSDPQVERSALVSRRVIAGHPLYALATHALGGARAPHSFAARRSVFQRHGKPLMVTECMLPALWRHLDAHGDGPRSGGPGGGA</sequence>
<protein>
    <recommendedName>
        <fullName evidence="1">Probable chorismate pyruvate-lyase</fullName>
        <shortName evidence="1">CL</shortName>
        <shortName evidence="1">CPL</shortName>
        <ecNumber evidence="1">4.1.3.40</ecNumber>
    </recommendedName>
</protein>